<organism>
    <name type="scientific">Dictyostelium discoideum</name>
    <name type="common">Social amoeba</name>
    <dbReference type="NCBI Taxonomy" id="44689"/>
    <lineage>
        <taxon>Eukaryota</taxon>
        <taxon>Amoebozoa</taxon>
        <taxon>Evosea</taxon>
        <taxon>Eumycetozoa</taxon>
        <taxon>Dictyostelia</taxon>
        <taxon>Dictyosteliales</taxon>
        <taxon>Dictyosteliaceae</taxon>
        <taxon>Dictyostelium</taxon>
    </lineage>
</organism>
<feature type="chain" id="PRO_0000198897" description="Rho-related protein rac1C">
    <location>
        <begin position="1"/>
        <end position="190"/>
    </location>
</feature>
<feature type="propeptide" id="PRO_0000281248" description="Removed in mature form" evidence="1">
    <location>
        <begin position="191"/>
        <end position="193"/>
    </location>
</feature>
<feature type="short sequence motif" description="Effector region" evidence="2">
    <location>
        <begin position="32"/>
        <end position="40"/>
    </location>
</feature>
<feature type="binding site" evidence="1">
    <location>
        <begin position="11"/>
        <end position="17"/>
    </location>
    <ligand>
        <name>GTP</name>
        <dbReference type="ChEBI" id="CHEBI:37565"/>
    </ligand>
</feature>
<feature type="binding site" evidence="1">
    <location>
        <begin position="57"/>
        <end position="61"/>
    </location>
    <ligand>
        <name>GTP</name>
        <dbReference type="ChEBI" id="CHEBI:37565"/>
    </ligand>
</feature>
<feature type="binding site" evidence="1">
    <location>
        <begin position="115"/>
        <end position="118"/>
    </location>
    <ligand>
        <name>GTP</name>
        <dbReference type="ChEBI" id="CHEBI:37565"/>
    </ligand>
</feature>
<feature type="modified residue" description="Cysteine methyl ester" evidence="1">
    <location>
        <position position="190"/>
    </location>
</feature>
<feature type="lipid moiety-binding region" description="S-geranylgeranyl cysteine" evidence="1">
    <location>
        <position position="190"/>
    </location>
</feature>
<evidence type="ECO:0000250" key="1"/>
<evidence type="ECO:0000255" key="2"/>
<evidence type="ECO:0000269" key="3">
    <source>
    </source>
</evidence>
<evidence type="ECO:0000269" key="4">
    <source>
    </source>
</evidence>
<evidence type="ECO:0000269" key="5">
    <source>
    </source>
</evidence>
<evidence type="ECO:0000305" key="6"/>
<name>RAC1C_DICDI</name>
<protein>
    <recommendedName>
        <fullName>Rho-related protein rac1C</fullName>
    </recommendedName>
</protein>
<dbReference type="EMBL" id="AF310885">
    <property type="protein sequence ID" value="AAG45114.1"/>
    <property type="molecule type" value="Genomic_DNA"/>
</dbReference>
<dbReference type="EMBL" id="AF153328">
    <property type="protein sequence ID" value="AAD37805.1"/>
    <property type="molecule type" value="mRNA"/>
</dbReference>
<dbReference type="EMBL" id="AAFI02000047">
    <property type="protein sequence ID" value="EAL66042.1"/>
    <property type="molecule type" value="Genomic_DNA"/>
</dbReference>
<dbReference type="EMBL" id="L11590">
    <property type="protein sequence ID" value="AAC37393.1"/>
    <property type="molecule type" value="mRNA"/>
</dbReference>
<dbReference type="RefSeq" id="XP_640169.1">
    <property type="nucleotide sequence ID" value="XM_635077.1"/>
</dbReference>
<dbReference type="SMR" id="P34146"/>
<dbReference type="FunCoup" id="P34146">
    <property type="interactions" value="412"/>
</dbReference>
<dbReference type="IntAct" id="P34146">
    <property type="interactions" value="1"/>
</dbReference>
<dbReference type="STRING" id="44689.P34146"/>
<dbReference type="PaxDb" id="44689-DDB0214823"/>
<dbReference type="EnsemblProtists" id="EAL66042">
    <property type="protein sequence ID" value="EAL66042"/>
    <property type="gene ID" value="DDB_G0282365"/>
</dbReference>
<dbReference type="GeneID" id="8623707"/>
<dbReference type="KEGG" id="ddi:DDB_G0282365"/>
<dbReference type="dictyBase" id="DDB_G0282365">
    <property type="gene designation" value="rac1C"/>
</dbReference>
<dbReference type="VEuPathDB" id="AmoebaDB:DDB_G0282365"/>
<dbReference type="eggNOG" id="KOG0393">
    <property type="taxonomic scope" value="Eukaryota"/>
</dbReference>
<dbReference type="HOGENOM" id="CLU_041217_21_3_1"/>
<dbReference type="InParanoid" id="P34146"/>
<dbReference type="OMA" id="KCCCSIF"/>
<dbReference type="PhylomeDB" id="P34146"/>
<dbReference type="Reactome" id="R-DDI-6798695">
    <property type="pathway name" value="Neutrophil degranulation"/>
</dbReference>
<dbReference type="Reactome" id="R-DDI-9013404">
    <property type="pathway name" value="RAC2 GTPase cycle"/>
</dbReference>
<dbReference type="Reactome" id="R-DDI-9013407">
    <property type="pathway name" value="RHOH GTPase cycle"/>
</dbReference>
<dbReference type="Reactome" id="R-DDI-9013408">
    <property type="pathway name" value="RHOG GTPase cycle"/>
</dbReference>
<dbReference type="Reactome" id="R-DDI-9013418">
    <property type="pathway name" value="RHOBTB2 GTPase cycle"/>
</dbReference>
<dbReference type="Reactome" id="R-DDI-9013422">
    <property type="pathway name" value="RHOBTB1 GTPase cycle"/>
</dbReference>
<dbReference type="PRO" id="PR:P34146"/>
<dbReference type="Proteomes" id="UP000002195">
    <property type="component" value="Chromosome 3"/>
</dbReference>
<dbReference type="GO" id="GO:0042995">
    <property type="term" value="C:cell projection"/>
    <property type="evidence" value="ECO:0000318"/>
    <property type="project" value="GO_Central"/>
</dbReference>
<dbReference type="GO" id="GO:0031410">
    <property type="term" value="C:cytoplasmic vesicle"/>
    <property type="evidence" value="ECO:0000318"/>
    <property type="project" value="GO_Central"/>
</dbReference>
<dbReference type="GO" id="GO:0005856">
    <property type="term" value="C:cytoskeleton"/>
    <property type="evidence" value="ECO:0000318"/>
    <property type="project" value="GO_Central"/>
</dbReference>
<dbReference type="GO" id="GO:0005886">
    <property type="term" value="C:plasma membrane"/>
    <property type="evidence" value="ECO:0000318"/>
    <property type="project" value="GO_Central"/>
</dbReference>
<dbReference type="GO" id="GO:0005525">
    <property type="term" value="F:GTP binding"/>
    <property type="evidence" value="ECO:0000318"/>
    <property type="project" value="GO_Central"/>
</dbReference>
<dbReference type="GO" id="GO:0003924">
    <property type="term" value="F:GTPase activity"/>
    <property type="evidence" value="ECO:0000318"/>
    <property type="project" value="GO_Central"/>
</dbReference>
<dbReference type="GO" id="GO:0019901">
    <property type="term" value="F:protein kinase binding"/>
    <property type="evidence" value="ECO:0000353"/>
    <property type="project" value="dictyBase"/>
</dbReference>
<dbReference type="GO" id="GO:0007015">
    <property type="term" value="P:actin filament organization"/>
    <property type="evidence" value="ECO:0000318"/>
    <property type="project" value="GO_Central"/>
</dbReference>
<dbReference type="GO" id="GO:0030865">
    <property type="term" value="P:cortical cytoskeleton organization"/>
    <property type="evidence" value="ECO:0000318"/>
    <property type="project" value="GO_Central"/>
</dbReference>
<dbReference type="GO" id="GO:0007163">
    <property type="term" value="P:establishment or maintenance of cell polarity"/>
    <property type="evidence" value="ECO:0000318"/>
    <property type="project" value="GO_Central"/>
</dbReference>
<dbReference type="GO" id="GO:0000281">
    <property type="term" value="P:mitotic cytokinesis"/>
    <property type="evidence" value="ECO:0000318"/>
    <property type="project" value="GO_Central"/>
</dbReference>
<dbReference type="GO" id="GO:0032956">
    <property type="term" value="P:regulation of actin cytoskeleton organization"/>
    <property type="evidence" value="ECO:0000318"/>
    <property type="project" value="GO_Central"/>
</dbReference>
<dbReference type="GO" id="GO:0008360">
    <property type="term" value="P:regulation of cell shape"/>
    <property type="evidence" value="ECO:0000318"/>
    <property type="project" value="GO_Central"/>
</dbReference>
<dbReference type="GO" id="GO:0009617">
    <property type="term" value="P:response to bacterium"/>
    <property type="evidence" value="ECO:0007007"/>
    <property type="project" value="dictyBase"/>
</dbReference>
<dbReference type="GO" id="GO:1902351">
    <property type="term" value="P:response to imidacloprid"/>
    <property type="evidence" value="ECO:0000270"/>
    <property type="project" value="dictyBase"/>
</dbReference>
<dbReference type="GO" id="GO:0019953">
    <property type="term" value="P:sexual reproduction"/>
    <property type="evidence" value="ECO:0000270"/>
    <property type="project" value="dictyBase"/>
</dbReference>
<dbReference type="GO" id="GO:0007165">
    <property type="term" value="P:signal transduction"/>
    <property type="evidence" value="ECO:0000318"/>
    <property type="project" value="GO_Central"/>
</dbReference>
<dbReference type="GO" id="GO:0007264">
    <property type="term" value="P:small GTPase-mediated signal transduction"/>
    <property type="evidence" value="ECO:0007669"/>
    <property type="project" value="InterPro"/>
</dbReference>
<dbReference type="CDD" id="cd01871">
    <property type="entry name" value="Rac1_like"/>
    <property type="match status" value="1"/>
</dbReference>
<dbReference type="FunFam" id="3.40.50.300:FF:000088">
    <property type="entry name" value="Ras-related C3 botulinum toxin substrate 1"/>
    <property type="match status" value="1"/>
</dbReference>
<dbReference type="Gene3D" id="3.40.50.300">
    <property type="entry name" value="P-loop containing nucleotide triphosphate hydrolases"/>
    <property type="match status" value="1"/>
</dbReference>
<dbReference type="InterPro" id="IPR027417">
    <property type="entry name" value="P-loop_NTPase"/>
</dbReference>
<dbReference type="InterPro" id="IPR005225">
    <property type="entry name" value="Small_GTP-bd"/>
</dbReference>
<dbReference type="InterPro" id="IPR001806">
    <property type="entry name" value="Small_GTPase"/>
</dbReference>
<dbReference type="InterPro" id="IPR003578">
    <property type="entry name" value="Small_GTPase_Rho"/>
</dbReference>
<dbReference type="NCBIfam" id="TIGR00231">
    <property type="entry name" value="small_GTP"/>
    <property type="match status" value="1"/>
</dbReference>
<dbReference type="PANTHER" id="PTHR24072">
    <property type="entry name" value="RHO FAMILY GTPASE"/>
    <property type="match status" value="1"/>
</dbReference>
<dbReference type="Pfam" id="PF00071">
    <property type="entry name" value="Ras"/>
    <property type="match status" value="1"/>
</dbReference>
<dbReference type="PRINTS" id="PR00449">
    <property type="entry name" value="RASTRNSFRMNG"/>
</dbReference>
<dbReference type="SMART" id="SM00175">
    <property type="entry name" value="RAB"/>
    <property type="match status" value="1"/>
</dbReference>
<dbReference type="SMART" id="SM00176">
    <property type="entry name" value="RAN"/>
    <property type="match status" value="1"/>
</dbReference>
<dbReference type="SMART" id="SM00173">
    <property type="entry name" value="RAS"/>
    <property type="match status" value="1"/>
</dbReference>
<dbReference type="SMART" id="SM00174">
    <property type="entry name" value="RHO"/>
    <property type="match status" value="1"/>
</dbReference>
<dbReference type="SUPFAM" id="SSF52540">
    <property type="entry name" value="P-loop containing nucleoside triphosphate hydrolases"/>
    <property type="match status" value="1"/>
</dbReference>
<dbReference type="PROSITE" id="PS51420">
    <property type="entry name" value="RHO"/>
    <property type="match status" value="1"/>
</dbReference>
<proteinExistence type="evidence at protein level"/>
<gene>
    <name type="primary">rac1C</name>
    <name type="ORF">DDB_G0282365</name>
</gene>
<comment type="function">
    <text evidence="3">Overexpression promotes the formation of filopodia and membrane ruffles.</text>
</comment>
<comment type="subunit">
    <text evidence="3 4 5">Interacts with pakB. Interacts (in GTP-bound form) with rgaA.</text>
</comment>
<comment type="subcellular location">
    <subcellularLocation>
        <location evidence="6">Cell membrane</location>
        <topology evidence="6">Lipid-anchor</topology>
        <orientation evidence="6">Cytoplasmic side</orientation>
    </subcellularLocation>
</comment>
<comment type="similarity">
    <text evidence="6">Belongs to the small GTPase superfamily. Rho family.</text>
</comment>
<accession>P34146</accession>
<accession>Q54S70</accession>
<accession>Q9U9S8</accession>
<keyword id="KW-1003">Cell membrane</keyword>
<keyword id="KW-0342">GTP-binding</keyword>
<keyword id="KW-0449">Lipoprotein</keyword>
<keyword id="KW-0472">Membrane</keyword>
<keyword id="KW-0488">Methylation</keyword>
<keyword id="KW-0547">Nucleotide-binding</keyword>
<keyword id="KW-0636">Prenylation</keyword>
<keyword id="KW-1185">Reference proteome</keyword>
<sequence>MQAIKCVVVGDGAVGKTCLLISYTTNAFPGEYIPTVFDNYSANVMVDGKPINLGLWDTAGQEDYDRLRPLSYPQTDVFLICFSIISPSSYENVSGKWGPEVFHHAPNVPIILVGTKMDMREDKETQDRLKEKKLYPVSYEQGLLKMKEINAFKYLECSALTQKGLKTVFDEAIRSVINPPVKKSKSKSGCNIL</sequence>
<reference key="1">
    <citation type="journal article" date="2001" name="Nucleic Acids Res.">
        <title>The Dictyostelium discoideum family of Rho-related proteins.</title>
        <authorList>
            <person name="Rivero F."/>
            <person name="Dislich H."/>
            <person name="Gloeckner G."/>
            <person name="Noegel A.A."/>
        </authorList>
    </citation>
    <scope>NUCLEOTIDE SEQUENCE [GENOMIC DNA]</scope>
    <source>
        <strain>AX4</strain>
    </source>
</reference>
<reference key="2">
    <citation type="submission" date="1999-05" db="EMBL/GenBank/DDBJ databases">
        <title>Full length sequence of Rac1C.</title>
        <authorList>
            <person name="Dumontier M."/>
            <person name="Hoecht P."/>
            <person name="Mintert U."/>
            <person name="Faix J."/>
        </authorList>
    </citation>
    <scope>NUCLEOTIDE SEQUENCE [MRNA]</scope>
    <source>
        <strain>AX3</strain>
    </source>
</reference>
<reference key="3">
    <citation type="journal article" date="2005" name="Nature">
        <title>The genome of the social amoeba Dictyostelium discoideum.</title>
        <authorList>
            <person name="Eichinger L."/>
            <person name="Pachebat J.A."/>
            <person name="Gloeckner G."/>
            <person name="Rajandream M.A."/>
            <person name="Sucgang R."/>
            <person name="Berriman M."/>
            <person name="Song J."/>
            <person name="Olsen R."/>
            <person name="Szafranski K."/>
            <person name="Xu Q."/>
            <person name="Tunggal B."/>
            <person name="Kummerfeld S."/>
            <person name="Madera M."/>
            <person name="Konfortov B.A."/>
            <person name="Rivero F."/>
            <person name="Bankier A.T."/>
            <person name="Lehmann R."/>
            <person name="Hamlin N."/>
            <person name="Davies R."/>
            <person name="Gaudet P."/>
            <person name="Fey P."/>
            <person name="Pilcher K."/>
            <person name="Chen G."/>
            <person name="Saunders D."/>
            <person name="Sodergren E.J."/>
            <person name="Davis P."/>
            <person name="Kerhornou A."/>
            <person name="Nie X."/>
            <person name="Hall N."/>
            <person name="Anjard C."/>
            <person name="Hemphill L."/>
            <person name="Bason N."/>
            <person name="Farbrother P."/>
            <person name="Desany B."/>
            <person name="Just E."/>
            <person name="Morio T."/>
            <person name="Rost R."/>
            <person name="Churcher C.M."/>
            <person name="Cooper J."/>
            <person name="Haydock S."/>
            <person name="van Driessche N."/>
            <person name="Cronin A."/>
            <person name="Goodhead I."/>
            <person name="Muzny D.M."/>
            <person name="Mourier T."/>
            <person name="Pain A."/>
            <person name="Lu M."/>
            <person name="Harper D."/>
            <person name="Lindsay R."/>
            <person name="Hauser H."/>
            <person name="James K.D."/>
            <person name="Quiles M."/>
            <person name="Madan Babu M."/>
            <person name="Saito T."/>
            <person name="Buchrieser C."/>
            <person name="Wardroper A."/>
            <person name="Felder M."/>
            <person name="Thangavelu M."/>
            <person name="Johnson D."/>
            <person name="Knights A."/>
            <person name="Loulseged H."/>
            <person name="Mungall K.L."/>
            <person name="Oliver K."/>
            <person name="Price C."/>
            <person name="Quail M.A."/>
            <person name="Urushihara H."/>
            <person name="Hernandez J."/>
            <person name="Rabbinowitsch E."/>
            <person name="Steffen D."/>
            <person name="Sanders M."/>
            <person name="Ma J."/>
            <person name="Kohara Y."/>
            <person name="Sharp S."/>
            <person name="Simmonds M.N."/>
            <person name="Spiegler S."/>
            <person name="Tivey A."/>
            <person name="Sugano S."/>
            <person name="White B."/>
            <person name="Walker D."/>
            <person name="Woodward J.R."/>
            <person name="Winckler T."/>
            <person name="Tanaka Y."/>
            <person name="Shaulsky G."/>
            <person name="Schleicher M."/>
            <person name="Weinstock G.M."/>
            <person name="Rosenthal A."/>
            <person name="Cox E.C."/>
            <person name="Chisholm R.L."/>
            <person name="Gibbs R.A."/>
            <person name="Loomis W.F."/>
            <person name="Platzer M."/>
            <person name="Kay R.R."/>
            <person name="Williams J.G."/>
            <person name="Dear P.H."/>
            <person name="Noegel A.A."/>
            <person name="Barrell B.G."/>
            <person name="Kuspa A."/>
        </authorList>
    </citation>
    <scope>NUCLEOTIDE SEQUENCE [LARGE SCALE GENOMIC DNA]</scope>
    <source>
        <strain>AX4</strain>
    </source>
</reference>
<reference key="4">
    <citation type="journal article" date="1993" name="Gene">
        <title>Cloning and characterization of seven novel Dictyostelium discoideum rac-related genes belonging to the rho family of GTPases.</title>
        <authorList>
            <person name="Bush J.M. IV"/>
            <person name="Franek K."/>
            <person name="Cardelli J.A."/>
        </authorList>
    </citation>
    <scope>NUCLEOTIDE SEQUENCE [MRNA] OF 11-193</scope>
    <source>
        <strain>AX3</strain>
    </source>
</reference>
<reference key="5">
    <citation type="journal article" date="1998" name="J. Cell Sci.">
        <title>The IQGAP-related protein DGAP1 interacts with Rac and is involved in the modulation of the F-actin cytoskeleton and control of cell motility.</title>
        <authorList>
            <person name="Faix J."/>
            <person name="Clougherty C."/>
            <person name="Konzok A."/>
            <person name="Mintert U."/>
            <person name="Murphy J."/>
            <person name="Albrecht R."/>
            <person name="Muhlbauer B."/>
            <person name="Kuhlmann J."/>
        </authorList>
    </citation>
    <scope>INTERACTION WITH RGAA</scope>
</reference>
<reference key="6">
    <citation type="journal article" date="2000" name="J. Cell Sci.">
        <title>Rac1 GTPases control filopodia formation, cell motility, endocytosis, cytokinesis and development in Dictyostelium.</title>
        <authorList>
            <person name="Dumontier M."/>
            <person name="Hoecht P."/>
            <person name="Mintert U."/>
            <person name="Faix J."/>
        </authorList>
    </citation>
    <scope>FUNCTION</scope>
    <scope>INTERACTION WITH RGAA</scope>
</reference>
<reference key="7">
    <citation type="journal article" date="2005" name="Mol. Biol. Cell">
        <title>Cellular distribution and functions of wild-type and constitutively activated Dictyostelium PakB.</title>
        <authorList>
            <person name="de la Roche M."/>
            <person name="Mahasneh A."/>
            <person name="Lee S.-F."/>
            <person name="Rivero F."/>
            <person name="Cote G.P."/>
        </authorList>
    </citation>
    <scope>INTERACTION WITH PAKB</scope>
</reference>